<comment type="function">
    <text evidence="1">Cell wall formation. Catalyzes the transfer of a GlcNAc subunit on undecaprenyl-pyrophosphoryl-MurNAc-pentapeptide (lipid intermediate I) to form undecaprenyl-pyrophosphoryl-MurNAc-(pentapeptide)GlcNAc (lipid intermediate II).</text>
</comment>
<comment type="catalytic activity">
    <reaction evidence="1">
        <text>di-trans,octa-cis-undecaprenyl diphospho-N-acetyl-alpha-D-muramoyl-L-alanyl-D-glutamyl-meso-2,6-diaminopimeloyl-D-alanyl-D-alanine + UDP-N-acetyl-alpha-D-glucosamine = di-trans,octa-cis-undecaprenyl diphospho-[N-acetyl-alpha-D-glucosaminyl-(1-&gt;4)]-N-acetyl-alpha-D-muramoyl-L-alanyl-D-glutamyl-meso-2,6-diaminopimeloyl-D-alanyl-D-alanine + UDP + H(+)</text>
        <dbReference type="Rhea" id="RHEA:31227"/>
        <dbReference type="ChEBI" id="CHEBI:15378"/>
        <dbReference type="ChEBI" id="CHEBI:57705"/>
        <dbReference type="ChEBI" id="CHEBI:58223"/>
        <dbReference type="ChEBI" id="CHEBI:61387"/>
        <dbReference type="ChEBI" id="CHEBI:61388"/>
        <dbReference type="EC" id="2.4.1.227"/>
    </reaction>
</comment>
<comment type="pathway">
    <text evidence="1">Cell wall biogenesis; peptidoglycan biosynthesis.</text>
</comment>
<comment type="subcellular location">
    <subcellularLocation>
        <location evidence="1">Cell inner membrane</location>
        <topology evidence="1">Peripheral membrane protein</topology>
        <orientation evidence="1">Cytoplasmic side</orientation>
    </subcellularLocation>
</comment>
<comment type="similarity">
    <text evidence="1">Belongs to the glycosyltransferase 28 family. MurG subfamily.</text>
</comment>
<proteinExistence type="inferred from homology"/>
<accession>A9R124</accession>
<sequence length="356" mass="37774">MSGKTKRLMVMAGGTGGHVFPGLAVAHHLMAQGWQVRWLGTADRMEASLVPQHGIEIDFIKISGLRGKGLMAQLTAPIRIYRAVRQAQKIMRDYQPNVVLGMGGYVSGPGGLAAWLCGVPVVLHEQNGIAGLTNRWLARIAKKVLQAFPGAFPNADVVGNPVRTDVLALPLPAVRLSGREGPIRVLVIGGSQGARILNQTLPLVAASLGEQITLWHQVGKGALPEVSQAYQQAGQAGHLVVEFIDDMAAAYAWADVVVCRSGALTVSEVAAAGLPAIFVPFQHKDRQQYWNALPLEKAGAAKIIEQPQFTATSVSSLLASWDRATLLSMAERARSVAIPDATERVAAEVVAASKSA</sequence>
<gene>
    <name evidence="1" type="primary">murG</name>
    <name type="ordered locus">YpAngola_A2918</name>
</gene>
<organism>
    <name type="scientific">Yersinia pestis bv. Antiqua (strain Angola)</name>
    <dbReference type="NCBI Taxonomy" id="349746"/>
    <lineage>
        <taxon>Bacteria</taxon>
        <taxon>Pseudomonadati</taxon>
        <taxon>Pseudomonadota</taxon>
        <taxon>Gammaproteobacteria</taxon>
        <taxon>Enterobacterales</taxon>
        <taxon>Yersiniaceae</taxon>
        <taxon>Yersinia</taxon>
    </lineage>
</organism>
<reference key="1">
    <citation type="journal article" date="2010" name="J. Bacteriol.">
        <title>Genome sequence of the deep-rooted Yersinia pestis strain Angola reveals new insights into the evolution and pangenome of the plague bacterium.</title>
        <authorList>
            <person name="Eppinger M."/>
            <person name="Worsham P.L."/>
            <person name="Nikolich M.P."/>
            <person name="Riley D.R."/>
            <person name="Sebastian Y."/>
            <person name="Mou S."/>
            <person name="Achtman M."/>
            <person name="Lindler L.E."/>
            <person name="Ravel J."/>
        </authorList>
    </citation>
    <scope>NUCLEOTIDE SEQUENCE [LARGE SCALE GENOMIC DNA]</scope>
    <source>
        <strain>Angola</strain>
    </source>
</reference>
<evidence type="ECO:0000255" key="1">
    <source>
        <dbReference type="HAMAP-Rule" id="MF_00033"/>
    </source>
</evidence>
<feature type="chain" id="PRO_1000090492" description="UDP-N-acetylglucosamine--N-acetylmuramyl-(pentapeptide) pyrophosphoryl-undecaprenol N-acetylglucosamine transferase">
    <location>
        <begin position="1"/>
        <end position="356"/>
    </location>
</feature>
<feature type="binding site" evidence="1">
    <location>
        <begin position="15"/>
        <end position="17"/>
    </location>
    <ligand>
        <name>UDP-N-acetyl-alpha-D-glucosamine</name>
        <dbReference type="ChEBI" id="CHEBI:57705"/>
    </ligand>
</feature>
<feature type="binding site" evidence="1">
    <location>
        <position position="127"/>
    </location>
    <ligand>
        <name>UDP-N-acetyl-alpha-D-glucosamine</name>
        <dbReference type="ChEBI" id="CHEBI:57705"/>
    </ligand>
</feature>
<feature type="binding site" evidence="1">
    <location>
        <position position="163"/>
    </location>
    <ligand>
        <name>UDP-N-acetyl-alpha-D-glucosamine</name>
        <dbReference type="ChEBI" id="CHEBI:57705"/>
    </ligand>
</feature>
<feature type="binding site" evidence="1">
    <location>
        <position position="191"/>
    </location>
    <ligand>
        <name>UDP-N-acetyl-alpha-D-glucosamine</name>
        <dbReference type="ChEBI" id="CHEBI:57705"/>
    </ligand>
</feature>
<feature type="binding site" evidence="1">
    <location>
        <position position="244"/>
    </location>
    <ligand>
        <name>UDP-N-acetyl-alpha-D-glucosamine</name>
        <dbReference type="ChEBI" id="CHEBI:57705"/>
    </ligand>
</feature>
<feature type="binding site" evidence="1">
    <location>
        <begin position="263"/>
        <end position="268"/>
    </location>
    <ligand>
        <name>UDP-N-acetyl-alpha-D-glucosamine</name>
        <dbReference type="ChEBI" id="CHEBI:57705"/>
    </ligand>
</feature>
<feature type="binding site" evidence="1">
    <location>
        <position position="288"/>
    </location>
    <ligand>
        <name>UDP-N-acetyl-alpha-D-glucosamine</name>
        <dbReference type="ChEBI" id="CHEBI:57705"/>
    </ligand>
</feature>
<dbReference type="EC" id="2.4.1.227" evidence="1"/>
<dbReference type="EMBL" id="CP000901">
    <property type="protein sequence ID" value="ABX87506.1"/>
    <property type="molecule type" value="Genomic_DNA"/>
</dbReference>
<dbReference type="RefSeq" id="WP_002210434.1">
    <property type="nucleotide sequence ID" value="NZ_CP009935.1"/>
</dbReference>
<dbReference type="SMR" id="A9R124"/>
<dbReference type="CAZy" id="GT28">
    <property type="family name" value="Glycosyltransferase Family 28"/>
</dbReference>
<dbReference type="GeneID" id="57974060"/>
<dbReference type="KEGG" id="ypg:YpAngola_A2918"/>
<dbReference type="PATRIC" id="fig|349746.12.peg.3961"/>
<dbReference type="UniPathway" id="UPA00219"/>
<dbReference type="GO" id="GO:0005886">
    <property type="term" value="C:plasma membrane"/>
    <property type="evidence" value="ECO:0007669"/>
    <property type="project" value="UniProtKB-SubCell"/>
</dbReference>
<dbReference type="GO" id="GO:0051991">
    <property type="term" value="F:UDP-N-acetyl-D-glucosamine:N-acetylmuramoyl-L-alanyl-D-glutamyl-meso-2,6-diaminopimelyl-D-alanyl-D-alanine-diphosphoundecaprenol 4-beta-N-acetylglucosaminlytransferase activity"/>
    <property type="evidence" value="ECO:0007669"/>
    <property type="project" value="RHEA"/>
</dbReference>
<dbReference type="GO" id="GO:0050511">
    <property type="term" value="F:undecaprenyldiphospho-muramoylpentapeptide beta-N-acetylglucosaminyltransferase activity"/>
    <property type="evidence" value="ECO:0007669"/>
    <property type="project" value="UniProtKB-UniRule"/>
</dbReference>
<dbReference type="GO" id="GO:0005975">
    <property type="term" value="P:carbohydrate metabolic process"/>
    <property type="evidence" value="ECO:0007669"/>
    <property type="project" value="InterPro"/>
</dbReference>
<dbReference type="GO" id="GO:0051301">
    <property type="term" value="P:cell division"/>
    <property type="evidence" value="ECO:0007669"/>
    <property type="project" value="UniProtKB-KW"/>
</dbReference>
<dbReference type="GO" id="GO:0071555">
    <property type="term" value="P:cell wall organization"/>
    <property type="evidence" value="ECO:0007669"/>
    <property type="project" value="UniProtKB-KW"/>
</dbReference>
<dbReference type="GO" id="GO:0030259">
    <property type="term" value="P:lipid glycosylation"/>
    <property type="evidence" value="ECO:0007669"/>
    <property type="project" value="UniProtKB-UniRule"/>
</dbReference>
<dbReference type="GO" id="GO:0009252">
    <property type="term" value="P:peptidoglycan biosynthetic process"/>
    <property type="evidence" value="ECO:0007669"/>
    <property type="project" value="UniProtKB-UniRule"/>
</dbReference>
<dbReference type="GO" id="GO:0008360">
    <property type="term" value="P:regulation of cell shape"/>
    <property type="evidence" value="ECO:0007669"/>
    <property type="project" value="UniProtKB-KW"/>
</dbReference>
<dbReference type="CDD" id="cd03785">
    <property type="entry name" value="GT28_MurG"/>
    <property type="match status" value="1"/>
</dbReference>
<dbReference type="FunFam" id="3.40.50.2000:FF:000016">
    <property type="entry name" value="UDP-N-acetylglucosamine--N-acetylmuramyl-(pentapeptide) pyrophosphoryl-undecaprenol N-acetylglucosamine transferase"/>
    <property type="match status" value="1"/>
</dbReference>
<dbReference type="FunFam" id="3.40.50.2000:FF:000018">
    <property type="entry name" value="UDP-N-acetylglucosamine--N-acetylmuramyl-(pentapeptide) pyrophosphoryl-undecaprenol N-acetylglucosamine transferase"/>
    <property type="match status" value="1"/>
</dbReference>
<dbReference type="Gene3D" id="3.40.50.2000">
    <property type="entry name" value="Glycogen Phosphorylase B"/>
    <property type="match status" value="2"/>
</dbReference>
<dbReference type="HAMAP" id="MF_00033">
    <property type="entry name" value="MurG"/>
    <property type="match status" value="1"/>
</dbReference>
<dbReference type="InterPro" id="IPR006009">
    <property type="entry name" value="GlcNAc_MurG"/>
</dbReference>
<dbReference type="InterPro" id="IPR007235">
    <property type="entry name" value="Glyco_trans_28_C"/>
</dbReference>
<dbReference type="InterPro" id="IPR004276">
    <property type="entry name" value="GlycoTrans_28_N"/>
</dbReference>
<dbReference type="NCBIfam" id="TIGR01133">
    <property type="entry name" value="murG"/>
    <property type="match status" value="1"/>
</dbReference>
<dbReference type="PANTHER" id="PTHR21015:SF22">
    <property type="entry name" value="GLYCOSYLTRANSFERASE"/>
    <property type="match status" value="1"/>
</dbReference>
<dbReference type="PANTHER" id="PTHR21015">
    <property type="entry name" value="UDP-N-ACETYLGLUCOSAMINE--N-ACETYLMURAMYL-(PENTAPEPTIDE) PYROPHOSPHORYL-UNDECAPRENOL N-ACETYLGLUCOSAMINE TRANSFERASE 1"/>
    <property type="match status" value="1"/>
</dbReference>
<dbReference type="Pfam" id="PF04101">
    <property type="entry name" value="Glyco_tran_28_C"/>
    <property type="match status" value="1"/>
</dbReference>
<dbReference type="Pfam" id="PF03033">
    <property type="entry name" value="Glyco_transf_28"/>
    <property type="match status" value="1"/>
</dbReference>
<dbReference type="SUPFAM" id="SSF53756">
    <property type="entry name" value="UDP-Glycosyltransferase/glycogen phosphorylase"/>
    <property type="match status" value="1"/>
</dbReference>
<name>MURG_YERPG</name>
<protein>
    <recommendedName>
        <fullName evidence="1">UDP-N-acetylglucosamine--N-acetylmuramyl-(pentapeptide) pyrophosphoryl-undecaprenol N-acetylglucosamine transferase</fullName>
        <ecNumber evidence="1">2.4.1.227</ecNumber>
    </recommendedName>
    <alternativeName>
        <fullName evidence="1">Undecaprenyl-PP-MurNAc-pentapeptide-UDPGlcNAc GlcNAc transferase</fullName>
    </alternativeName>
</protein>
<keyword id="KW-0131">Cell cycle</keyword>
<keyword id="KW-0132">Cell division</keyword>
<keyword id="KW-0997">Cell inner membrane</keyword>
<keyword id="KW-1003">Cell membrane</keyword>
<keyword id="KW-0133">Cell shape</keyword>
<keyword id="KW-0961">Cell wall biogenesis/degradation</keyword>
<keyword id="KW-0328">Glycosyltransferase</keyword>
<keyword id="KW-0472">Membrane</keyword>
<keyword id="KW-0573">Peptidoglycan synthesis</keyword>
<keyword id="KW-0808">Transferase</keyword>